<sequence>MSHYDILQAPVISEKAYSAMERGVYSFWVSPKATKTEIKDAIQQAFGVRVIGISTMNVPGKRKRVGRFIGQRNDRKKAIVRLAEGQSIEALAGQA</sequence>
<gene>
    <name evidence="2" type="primary">rplW</name>
    <name type="ordered locus">DR_0313</name>
</gene>
<evidence type="ECO:0000250" key="1"/>
<evidence type="ECO:0000255" key="2">
    <source>
        <dbReference type="HAMAP-Rule" id="MF_01369"/>
    </source>
</evidence>
<evidence type="ECO:0000269" key="3">
    <source>
    </source>
</evidence>
<evidence type="ECO:0000269" key="4">
    <source>
    </source>
</evidence>
<evidence type="ECO:0000269" key="5">
    <source>
    </source>
</evidence>
<evidence type="ECO:0000269" key="6">
    <source>
    </source>
</evidence>
<evidence type="ECO:0000269" key="7">
    <source>
    </source>
</evidence>
<evidence type="ECO:0000269" key="8">
    <source>
    </source>
</evidence>
<evidence type="ECO:0000269" key="9">
    <source>
    </source>
</evidence>
<evidence type="ECO:0000269" key="10">
    <source>
    </source>
</evidence>
<evidence type="ECO:0000269" key="11">
    <source>
    </source>
</evidence>
<evidence type="ECO:0000305" key="12"/>
<evidence type="ECO:0007829" key="13">
    <source>
        <dbReference type="PDB" id="5DM6"/>
    </source>
</evidence>
<dbReference type="EMBL" id="AE000513">
    <property type="protein sequence ID" value="AAF09894.1"/>
    <property type="molecule type" value="Genomic_DNA"/>
</dbReference>
<dbReference type="PIR" id="A75534">
    <property type="entry name" value="A75534"/>
</dbReference>
<dbReference type="RefSeq" id="NP_294036.1">
    <property type="nucleotide sequence ID" value="NC_001263.1"/>
</dbReference>
<dbReference type="RefSeq" id="WP_010886958.1">
    <property type="nucleotide sequence ID" value="NC_001263.1"/>
</dbReference>
<dbReference type="PDB" id="1NKW">
    <property type="method" value="X-ray"/>
    <property type="resolution" value="3.10 A"/>
    <property type="chains" value="R=1-95"/>
</dbReference>
<dbReference type="PDB" id="1NWX">
    <property type="method" value="X-ray"/>
    <property type="resolution" value="3.50 A"/>
    <property type="chains" value="R=2-95"/>
</dbReference>
<dbReference type="PDB" id="1NWY">
    <property type="method" value="X-ray"/>
    <property type="resolution" value="3.30 A"/>
    <property type="chains" value="R=2-95"/>
</dbReference>
<dbReference type="PDB" id="1SM1">
    <property type="method" value="X-ray"/>
    <property type="resolution" value="3.42 A"/>
    <property type="chains" value="R=1-95"/>
</dbReference>
<dbReference type="PDB" id="1XBP">
    <property type="method" value="X-ray"/>
    <property type="resolution" value="3.50 A"/>
    <property type="chains" value="R=2-95"/>
</dbReference>
<dbReference type="PDB" id="2AAR">
    <property type="method" value="X-ray"/>
    <property type="resolution" value="3.50 A"/>
    <property type="chains" value="R=1-95"/>
</dbReference>
<dbReference type="PDB" id="2D3O">
    <property type="method" value="X-ray"/>
    <property type="resolution" value="3.35 A"/>
    <property type="chains" value="R=1-95"/>
</dbReference>
<dbReference type="PDB" id="2ZJP">
    <property type="method" value="X-ray"/>
    <property type="resolution" value="3.70 A"/>
    <property type="chains" value="Q=1-95"/>
</dbReference>
<dbReference type="PDB" id="2ZJQ">
    <property type="method" value="X-ray"/>
    <property type="resolution" value="3.30 A"/>
    <property type="chains" value="Q=1-95"/>
</dbReference>
<dbReference type="PDB" id="2ZJR">
    <property type="method" value="X-ray"/>
    <property type="resolution" value="2.91 A"/>
    <property type="chains" value="Q=1-95"/>
</dbReference>
<dbReference type="PDB" id="3CF5">
    <property type="method" value="X-ray"/>
    <property type="resolution" value="3.30 A"/>
    <property type="chains" value="Q=1-95"/>
</dbReference>
<dbReference type="PDB" id="3DLL">
    <property type="method" value="X-ray"/>
    <property type="resolution" value="3.50 A"/>
    <property type="chains" value="Q=1-95"/>
</dbReference>
<dbReference type="PDB" id="3PIO">
    <property type="method" value="X-ray"/>
    <property type="resolution" value="3.25 A"/>
    <property type="chains" value="Q=1-95"/>
</dbReference>
<dbReference type="PDB" id="3PIP">
    <property type="method" value="X-ray"/>
    <property type="resolution" value="3.45 A"/>
    <property type="chains" value="Q=1-95"/>
</dbReference>
<dbReference type="PDB" id="4IO9">
    <property type="method" value="X-ray"/>
    <property type="resolution" value="3.20 A"/>
    <property type="chains" value="Q=1-95"/>
</dbReference>
<dbReference type="PDB" id="4IOA">
    <property type="method" value="X-ray"/>
    <property type="resolution" value="3.20 A"/>
    <property type="chains" value="Q=1-95"/>
</dbReference>
<dbReference type="PDB" id="4IOC">
    <property type="method" value="X-ray"/>
    <property type="resolution" value="3.60 A"/>
    <property type="chains" value="Q=1-95"/>
</dbReference>
<dbReference type="PDB" id="4U67">
    <property type="method" value="X-ray"/>
    <property type="resolution" value="3.65 A"/>
    <property type="chains" value="Q=1-95"/>
</dbReference>
<dbReference type="PDB" id="4V49">
    <property type="method" value="X-ray"/>
    <property type="resolution" value="8.70 A"/>
    <property type="chains" value="R=2-94"/>
</dbReference>
<dbReference type="PDB" id="4V4A">
    <property type="method" value="X-ray"/>
    <property type="resolution" value="9.50 A"/>
    <property type="chains" value="R=2-94"/>
</dbReference>
<dbReference type="PDB" id="4V4G">
    <property type="method" value="X-ray"/>
    <property type="resolution" value="11.50 A"/>
    <property type="chains" value="U=2-94"/>
</dbReference>
<dbReference type="PDB" id="4WFN">
    <property type="method" value="X-ray"/>
    <property type="resolution" value="3.54 A"/>
    <property type="chains" value="Q=1-95"/>
</dbReference>
<dbReference type="PDB" id="5DM6">
    <property type="method" value="X-ray"/>
    <property type="resolution" value="2.90 A"/>
    <property type="chains" value="Q=2-94"/>
</dbReference>
<dbReference type="PDB" id="5DM7">
    <property type="method" value="X-ray"/>
    <property type="resolution" value="3.00 A"/>
    <property type="chains" value="Q=2-94"/>
</dbReference>
<dbReference type="PDB" id="5JVG">
    <property type="method" value="X-ray"/>
    <property type="resolution" value="3.43 A"/>
    <property type="chains" value="Q=1-95"/>
</dbReference>
<dbReference type="PDB" id="5JVH">
    <property type="method" value="X-ray"/>
    <property type="resolution" value="3.58 A"/>
    <property type="chains" value="Q=1-95"/>
</dbReference>
<dbReference type="PDB" id="7A0R">
    <property type="method" value="X-ray"/>
    <property type="resolution" value="3.30 A"/>
    <property type="chains" value="Q=2-94"/>
</dbReference>
<dbReference type="PDB" id="7A0S">
    <property type="method" value="X-ray"/>
    <property type="resolution" value="3.22 A"/>
    <property type="chains" value="Q=2-94"/>
</dbReference>
<dbReference type="PDB" id="7A18">
    <property type="method" value="X-ray"/>
    <property type="resolution" value="3.40 A"/>
    <property type="chains" value="Q=2-94"/>
</dbReference>
<dbReference type="PDBsum" id="1NKW"/>
<dbReference type="PDBsum" id="1NWX"/>
<dbReference type="PDBsum" id="1NWY"/>
<dbReference type="PDBsum" id="1SM1"/>
<dbReference type="PDBsum" id="1XBP"/>
<dbReference type="PDBsum" id="2AAR"/>
<dbReference type="PDBsum" id="2D3O"/>
<dbReference type="PDBsum" id="2ZJP"/>
<dbReference type="PDBsum" id="2ZJQ"/>
<dbReference type="PDBsum" id="2ZJR"/>
<dbReference type="PDBsum" id="3CF5"/>
<dbReference type="PDBsum" id="3DLL"/>
<dbReference type="PDBsum" id="3PIO"/>
<dbReference type="PDBsum" id="3PIP"/>
<dbReference type="PDBsum" id="4IO9"/>
<dbReference type="PDBsum" id="4IOA"/>
<dbReference type="PDBsum" id="4IOC"/>
<dbReference type="PDBsum" id="4U67"/>
<dbReference type="PDBsum" id="4V49"/>
<dbReference type="PDBsum" id="4V4A"/>
<dbReference type="PDBsum" id="4V4G"/>
<dbReference type="PDBsum" id="4WFN"/>
<dbReference type="PDBsum" id="5DM6"/>
<dbReference type="PDBsum" id="5DM7"/>
<dbReference type="PDBsum" id="5JVG"/>
<dbReference type="PDBsum" id="5JVH"/>
<dbReference type="PDBsum" id="7A0R"/>
<dbReference type="PDBsum" id="7A0S"/>
<dbReference type="PDBsum" id="7A18"/>
<dbReference type="SMR" id="Q9RXK0"/>
<dbReference type="FunCoup" id="Q9RXK0">
    <property type="interactions" value="340"/>
</dbReference>
<dbReference type="IntAct" id="Q9RXK0">
    <property type="interactions" value="1"/>
</dbReference>
<dbReference type="STRING" id="243230.DR_0313"/>
<dbReference type="PaxDb" id="243230-DR_0313"/>
<dbReference type="EnsemblBacteria" id="AAF09894">
    <property type="protein sequence ID" value="AAF09894"/>
    <property type="gene ID" value="DR_0313"/>
</dbReference>
<dbReference type="GeneID" id="69516545"/>
<dbReference type="KEGG" id="dra:DR_0313"/>
<dbReference type="PATRIC" id="fig|243230.17.peg.479"/>
<dbReference type="eggNOG" id="COG0089">
    <property type="taxonomic scope" value="Bacteria"/>
</dbReference>
<dbReference type="HOGENOM" id="CLU_037562_3_1_0"/>
<dbReference type="InParanoid" id="Q9RXK0"/>
<dbReference type="OrthoDB" id="9793353at2"/>
<dbReference type="EvolutionaryTrace" id="Q9RXK0"/>
<dbReference type="Proteomes" id="UP000002524">
    <property type="component" value="Chromosome 1"/>
</dbReference>
<dbReference type="GO" id="GO:0022625">
    <property type="term" value="C:cytosolic large ribosomal subunit"/>
    <property type="evidence" value="ECO:0000318"/>
    <property type="project" value="GO_Central"/>
</dbReference>
<dbReference type="GO" id="GO:0019843">
    <property type="term" value="F:rRNA binding"/>
    <property type="evidence" value="ECO:0007669"/>
    <property type="project" value="UniProtKB-UniRule"/>
</dbReference>
<dbReference type="GO" id="GO:0003735">
    <property type="term" value="F:structural constituent of ribosome"/>
    <property type="evidence" value="ECO:0000318"/>
    <property type="project" value="GO_Central"/>
</dbReference>
<dbReference type="GO" id="GO:0006412">
    <property type="term" value="P:translation"/>
    <property type="evidence" value="ECO:0007669"/>
    <property type="project" value="UniProtKB-UniRule"/>
</dbReference>
<dbReference type="FunFam" id="3.30.70.330:FF:000001">
    <property type="entry name" value="50S ribosomal protein L23"/>
    <property type="match status" value="1"/>
</dbReference>
<dbReference type="Gene3D" id="3.30.70.330">
    <property type="match status" value="1"/>
</dbReference>
<dbReference type="HAMAP" id="MF_01369_B">
    <property type="entry name" value="Ribosomal_uL23_B"/>
    <property type="match status" value="1"/>
</dbReference>
<dbReference type="InterPro" id="IPR012677">
    <property type="entry name" value="Nucleotide-bd_a/b_plait_sf"/>
</dbReference>
<dbReference type="InterPro" id="IPR013025">
    <property type="entry name" value="Ribosomal_uL23-like"/>
</dbReference>
<dbReference type="InterPro" id="IPR012678">
    <property type="entry name" value="Ribosomal_uL23/eL15/eS24_sf"/>
</dbReference>
<dbReference type="InterPro" id="IPR001014">
    <property type="entry name" value="Ribosomal_uL23_CS"/>
</dbReference>
<dbReference type="NCBIfam" id="NF004359">
    <property type="entry name" value="PRK05738.1-3"/>
    <property type="match status" value="1"/>
</dbReference>
<dbReference type="NCBIfam" id="NF004363">
    <property type="entry name" value="PRK05738.2-4"/>
    <property type="match status" value="1"/>
</dbReference>
<dbReference type="NCBIfam" id="NF004366">
    <property type="entry name" value="PRK05738.3-2"/>
    <property type="match status" value="1"/>
</dbReference>
<dbReference type="PANTHER" id="PTHR11620">
    <property type="entry name" value="60S RIBOSOMAL PROTEIN L23A"/>
    <property type="match status" value="1"/>
</dbReference>
<dbReference type="Pfam" id="PF00276">
    <property type="entry name" value="Ribosomal_L23"/>
    <property type="match status" value="1"/>
</dbReference>
<dbReference type="SUPFAM" id="SSF54189">
    <property type="entry name" value="Ribosomal proteins S24e, L23 and L15e"/>
    <property type="match status" value="1"/>
</dbReference>
<dbReference type="PROSITE" id="PS00050">
    <property type="entry name" value="RIBOSOMAL_L23"/>
    <property type="match status" value="1"/>
</dbReference>
<comment type="function">
    <text evidence="1 10 11">One of the early assembly protein (By similarity) it binds 23S rRNA. One of the proteins that surrounds the polypeptide exit tunnel on the outside of the subunit. Forms the main docking site for trigger factor binding to the ribosome (PubMed:16091460, PubMed:16271892).</text>
</comment>
<comment type="subunit">
    <text evidence="2 3 5 6 7 8 9 10 11">Part of the 50S ribosomal subunit. Contacts protein L29 and trigger factor when it is bound to the ribosome (PubMed:16091460, PubMed:16271892).</text>
</comment>
<comment type="similarity">
    <text evidence="2">Belongs to the universal ribosomal protein uL23 family.</text>
</comment>
<organism>
    <name type="scientific">Deinococcus radiodurans (strain ATCC 13939 / DSM 20539 / JCM 16871 / CCUG 27074 / LMG 4051 / NBRC 15346 / NCIMB 9279 / VKM B-1422 / R1)</name>
    <dbReference type="NCBI Taxonomy" id="243230"/>
    <lineage>
        <taxon>Bacteria</taxon>
        <taxon>Thermotogati</taxon>
        <taxon>Deinococcota</taxon>
        <taxon>Deinococci</taxon>
        <taxon>Deinococcales</taxon>
        <taxon>Deinococcaceae</taxon>
        <taxon>Deinococcus</taxon>
    </lineage>
</organism>
<keyword id="KW-0002">3D-structure</keyword>
<keyword id="KW-0903">Direct protein sequencing</keyword>
<keyword id="KW-1185">Reference proteome</keyword>
<keyword id="KW-0687">Ribonucleoprotein</keyword>
<keyword id="KW-0689">Ribosomal protein</keyword>
<keyword id="KW-0694">RNA-binding</keyword>
<keyword id="KW-0699">rRNA-binding</keyword>
<protein>
    <recommendedName>
        <fullName evidence="2">Large ribosomal subunit protein uL23</fullName>
    </recommendedName>
    <alternativeName>
        <fullName evidence="12">50S ribosomal protein L23</fullName>
    </alternativeName>
</protein>
<reference key="1">
    <citation type="journal article" date="1999" name="Science">
        <title>Genome sequence of the radioresistant bacterium Deinococcus radiodurans R1.</title>
        <authorList>
            <person name="White O."/>
            <person name="Eisen J.A."/>
            <person name="Heidelberg J.F."/>
            <person name="Hickey E.K."/>
            <person name="Peterson J.D."/>
            <person name="Dodson R.J."/>
            <person name="Haft D.H."/>
            <person name="Gwinn M.L."/>
            <person name="Nelson W.C."/>
            <person name="Richardson D.L."/>
            <person name="Moffat K.S."/>
            <person name="Qin H."/>
            <person name="Jiang L."/>
            <person name="Pamphile W."/>
            <person name="Crosby M."/>
            <person name="Shen M."/>
            <person name="Vamathevan J.J."/>
            <person name="Lam P."/>
            <person name="McDonald L.A."/>
            <person name="Utterback T.R."/>
            <person name="Zalewski C."/>
            <person name="Makarova K.S."/>
            <person name="Aravind L."/>
            <person name="Daly M.J."/>
            <person name="Minton K.W."/>
            <person name="Fleischmann R.D."/>
            <person name="Ketchum K.A."/>
            <person name="Nelson K.E."/>
            <person name="Salzberg S.L."/>
            <person name="Smith H.O."/>
            <person name="Venter J.C."/>
            <person name="Fraser C.M."/>
        </authorList>
    </citation>
    <scope>NUCLEOTIDE SEQUENCE [LARGE SCALE GENOMIC DNA]</scope>
    <source>
        <strain>ATCC 13939 / DSM 20539 / JCM 16871 / CCUG 27074 / LMG 4051 / NBRC 15346 / NCIMB 9279 / VKM B-1422 / R1</strain>
    </source>
</reference>
<reference key="2">
    <citation type="journal article" date="2001" name="Cell">
        <title>High resolution structure of the large ribosomal subunit from a mesophilic eubacterium.</title>
        <authorList>
            <person name="Harms J."/>
            <person name="Schluenzen F."/>
            <person name="Zarivach R."/>
            <person name="Bashan A."/>
            <person name="Gat S."/>
            <person name="Agmon I."/>
            <person name="Bartels H."/>
            <person name="Franceschi F."/>
            <person name="Yonath A."/>
        </authorList>
    </citation>
    <scope>PROTEIN SEQUENCE OF 2-6</scope>
    <scope>X-RAY CRYSTALLOGRAPHY (3.1 ANGSTROMS) OF THE 50S SUBUNIT</scope>
    <scope>CONTACTS WITH 23S RRNA</scope>
    <scope>CONTACTS WITH L29</scope>
    <source>
        <strain>ATCC 13939 / DSM 20539 / JCM 16871 / CCUG 27074 / LMG 4051 / NBRC 15346 / NCIMB 9279 / VKM B-1422 / R1</strain>
    </source>
</reference>
<reference key="3">
    <citation type="journal article" date="2001" name="Nature">
        <title>Structural basis for the interaction of antibiotics with the peptidyl transferase centre in eubacteria.</title>
        <authorList>
            <person name="Schluenzen F."/>
            <person name="Zarivach R."/>
            <person name="Harms J."/>
            <person name="Bashan A."/>
            <person name="Tocilj A."/>
            <person name="Albrecht R."/>
            <person name="Yonath A."/>
            <person name="Franceschi F."/>
        </authorList>
    </citation>
    <scope>X-RAY CRYSTALLOGRAPHY (3.1 ANGSTROMS) OF THE 50S SUBUNIT IN COMPLEX WITH FIVE ANTIBIOTICS</scope>
    <source>
        <strain>ATCC 13939 / DSM 20539 / JCM 16871 / CCUG 27074 / LMG 4051 / NBRC 15346 / NCIMB 9279 / VKM B-1422 / R1</strain>
    </source>
</reference>
<reference key="4">
    <citation type="journal article" date="2003" name="Mol. Cell">
        <title>Structural basis of the ribosomal machinery for peptide bond formation, translocation, and nascent chain progression.</title>
        <authorList>
            <person name="Bashan A."/>
            <person name="Agmon I."/>
            <person name="Zarivach R."/>
            <person name="Schluenzen F."/>
            <person name="Harms J."/>
            <person name="Berisio R."/>
            <person name="Bartels H."/>
            <person name="Franceschi F."/>
            <person name="Auerbach T."/>
            <person name="Hansen H.A."/>
            <person name="Kossoy E."/>
            <person name="Kessler M."/>
            <person name="Yonath A."/>
        </authorList>
    </citation>
    <scope>X-RAY CRYSTALLOGRAPHY (3.5 ANGSTROMS) OF THE 50S SUBUNIT IN COMPLEX WITH TRNA MIMICS</scope>
    <source>
        <strain>ATCC 13939 / DSM 20539 / JCM 16871 / CCUG 27074 / LMG 4051 / NBRC 15346 / NCIMB 9279 / VKM B-1422 / R1</strain>
    </source>
</reference>
<reference key="5">
    <citation type="journal article" date="2003" name="Structure">
        <title>Structural basis for the antibiotic activity of ketolides and azalides.</title>
        <authorList>
            <person name="Schluenzen F."/>
            <person name="Harms J.M."/>
            <person name="Franceschi F."/>
            <person name="Hansen H.A."/>
            <person name="Bartels H."/>
            <person name="Zarivach R."/>
            <person name="Yonath A."/>
        </authorList>
    </citation>
    <scope>X-RAY CRYSTALLOGRAPHY (3.3 ANGSTROMS) OF THE 50S SUBUNIT IN COMPLEX WITH MODIFIED MACROLIDE ANTIBIOTICS</scope>
    <source>
        <strain>ATCC 13939 / DSM 20539 / JCM 16871 / CCUG 27074 / LMG 4051 / NBRC 15346 / NCIMB 9279 / VKM B-1422 / R1</strain>
    </source>
</reference>
<reference key="6">
    <citation type="journal article" date="2003" name="Nat. Struct. Biol.">
        <title>Structural insight into the role of the ribosomal tunnel in cellular regulation.</title>
        <authorList>
            <person name="Berisio R."/>
            <person name="Schluenzen F."/>
            <person name="Harms J."/>
            <person name="Bashan A."/>
            <person name="Auerbach T."/>
            <person name="Baram D."/>
            <person name="Yonath A."/>
        </authorList>
    </citation>
    <scope>X-RAY CRYSTALLOGRAPHY (3.4 ANGSTROMS) OF THE 50S SUBUNIT IN COMPLEX WITH TROLEANDOMYCIN</scope>
    <source>
        <strain>ATCC 13939 / DSM 20539 / JCM 16871 / CCUG 27074 / LMG 4051 / NBRC 15346 / NCIMB 9279 / VKM B-1422 / R1</strain>
    </source>
</reference>
<reference key="7">
    <citation type="journal article" date="2004" name="BMC Biol.">
        <title>Alterations at the peptidyl transferase centre of the ribosome induced by the synergistic action of the streptogramins dalfopristin and quinupristin.</title>
        <authorList>
            <person name="Harms J.M."/>
            <person name="Schluenzen F."/>
            <person name="Fucini P."/>
            <person name="Bartels H."/>
            <person name="Yonath A."/>
        </authorList>
    </citation>
    <scope>X-RAY CRYSTALLOGRAPHY (3.4 ANGSTROMS) OF THE 50S SUBUNIT IN COMPLEX WITH THE STREPTOGRAMINS QUINUPRISTIN AND DALFOPRISTIN</scope>
    <source>
        <strain>ATCC 13939 / DSM 20539 / JCM 16871 / CCUG 27074 / LMG 4051 / NBRC 15346 / NCIMB 9279 / VKM B-1422 / R1</strain>
    </source>
</reference>
<reference key="8">
    <citation type="journal article" date="2004" name="Mol. Microbiol.">
        <title>Inhibition of peptide bond formation by pleuromutilins: the structure of the 50S ribosomal subunit from Deinococcus radiodurans in complex with tiamulin.</title>
        <authorList>
            <person name="Schluenzen F."/>
            <person name="Pyetan E."/>
            <person name="Fucini P."/>
            <person name="Yonath A."/>
            <person name="Harms J.M."/>
        </authorList>
    </citation>
    <scope>X-RAY CRYSTALLOGRAPHY (3.5 ANGSTROMS) OF THE 50S SUBUNIT IN COMPLEX WITH TIAMULIN</scope>
    <source>
        <strain>ATCC 13939 / DSM 20539 / JCM 16871 / CCUG 27074 / LMG 4051 / NBRC 15346 / NCIMB 9279 / VKM B-1422 / R1</strain>
    </source>
</reference>
<reference key="9">
    <citation type="journal article" date="2005" name="Proc. Natl. Acad. Sci. U.S.A.">
        <title>Structure of trigger factor binding domain in biologically homologous complex with eubacterial ribosome reveals its chaperone action.</title>
        <authorList>
            <person name="Baram D."/>
            <person name="Pyetan E."/>
            <person name="Sittner A."/>
            <person name="Auerbach-Nevo T."/>
            <person name="Bashan A."/>
            <person name="Yonath A."/>
        </authorList>
    </citation>
    <scope>X-RAY CRYSTALLOGRAPHY (3.5 ANGSTROMS) OF THE 50S SUBUNIT IN COMPLEX WITH TRIGGER FACTOR</scope>
</reference>
<reference key="10">
    <citation type="journal article" date="2005" name="Structure">
        <title>The binding mode of the trigger factor on the ribosome: implications for protein folding and SRP interaction.</title>
        <authorList>
            <person name="Schluenzen F."/>
            <person name="Wilson D.N."/>
            <person name="Tian P."/>
            <person name="Harms J.M."/>
            <person name="McInnes S.J."/>
            <person name="Hansen H.A.S."/>
            <person name="Albrecht R."/>
            <person name="Buerger J."/>
            <person name="Wilbanks S.M."/>
            <person name="Fucini P."/>
        </authorList>
    </citation>
    <scope>X-RAY CRYSTALLOGRAPHY (3.35 ANGSTROMS) OF THE 50S SUBUNIT IN COMPLEX WITH TRIGGER FACTOR</scope>
</reference>
<feature type="initiator methionine" description="Removed" evidence="4">
    <location>
        <position position="1"/>
    </location>
</feature>
<feature type="chain" id="PRO_0000129406" description="Large ribosomal subunit protein uL23">
    <location>
        <begin position="2"/>
        <end position="95"/>
    </location>
</feature>
<feature type="helix" evidence="13">
    <location>
        <begin position="3"/>
        <end position="6"/>
    </location>
</feature>
<feature type="strand" evidence="13">
    <location>
        <begin position="7"/>
        <end position="10"/>
    </location>
</feature>
<feature type="helix" evidence="13">
    <location>
        <begin position="14"/>
        <end position="21"/>
    </location>
</feature>
<feature type="strand" evidence="13">
    <location>
        <begin position="24"/>
        <end position="29"/>
    </location>
</feature>
<feature type="helix" evidence="13">
    <location>
        <begin position="35"/>
        <end position="46"/>
    </location>
</feature>
<feature type="strand" evidence="13">
    <location>
        <begin position="50"/>
        <end position="58"/>
    </location>
</feature>
<feature type="strand" evidence="13">
    <location>
        <begin position="62"/>
        <end position="65"/>
    </location>
</feature>
<feature type="strand" evidence="13">
    <location>
        <begin position="68"/>
        <end position="71"/>
    </location>
</feature>
<feature type="strand" evidence="13">
    <location>
        <begin position="75"/>
        <end position="83"/>
    </location>
</feature>
<feature type="helix" evidence="13">
    <location>
        <begin position="89"/>
        <end position="92"/>
    </location>
</feature>
<proteinExistence type="evidence at protein level"/>
<accession>Q9RXK0</accession>
<name>RL23_DEIRA</name>